<name>USP_BOMMO</name>
<comment type="subunit">
    <text evidence="4">Heterodimer of USP and ECR.</text>
</comment>
<comment type="subcellular location">
    <subcellularLocation>
        <location>Nucleus</location>
    </subcellularLocation>
</comment>
<comment type="tissue specificity">
    <text>Abundant expression seen in males and ovaries.</text>
</comment>
<comment type="developmental stage">
    <text>It is present in constant amounts throughout vitellogenesis, decreases between the end of vitellogenesis and the onset of choriogenesis and increases again during the later stages of choriogenesis (but levels remain lower than that observed during vitellogenesis).</text>
</comment>
<comment type="domain">
    <text>Composed of three domains: a modulating N-terminal domain, a DNA-binding domain and a C-terminal ligand-binding domain.</text>
</comment>
<comment type="similarity">
    <text evidence="4">Belongs to the nuclear hormone receptor family. NR2 subfamily.</text>
</comment>
<dbReference type="EMBL" id="U06073">
    <property type="protein sequence ID" value="AAC13750.1"/>
    <property type="molecule type" value="mRNA"/>
</dbReference>
<dbReference type="PIR" id="S44490">
    <property type="entry name" value="S44490"/>
</dbReference>
<dbReference type="RefSeq" id="NP_001037470.1">
    <property type="nucleotide sequence ID" value="NM_001044005.1"/>
</dbReference>
<dbReference type="SMR" id="P49700"/>
<dbReference type="DIP" id="DIP-788N"/>
<dbReference type="FunCoup" id="P49700">
    <property type="interactions" value="900"/>
</dbReference>
<dbReference type="STRING" id="7091.P49700"/>
<dbReference type="PaxDb" id="7091-BGIBMGA006183-TA"/>
<dbReference type="EnsemblMetazoa" id="NM_001044005.1">
    <property type="protein sequence ID" value="NP_001037470.1"/>
    <property type="gene ID" value="GeneID_693034"/>
</dbReference>
<dbReference type="GeneID" id="693034"/>
<dbReference type="KEGG" id="bmor:693034"/>
<dbReference type="CTD" id="31165"/>
<dbReference type="eggNOG" id="KOG3575">
    <property type="taxonomic scope" value="Eukaryota"/>
</dbReference>
<dbReference type="HOGENOM" id="CLU_061578_1_0_1"/>
<dbReference type="InParanoid" id="P49700"/>
<dbReference type="OrthoDB" id="640676at7088"/>
<dbReference type="Proteomes" id="UP000005204">
    <property type="component" value="Unassembled WGS sequence"/>
</dbReference>
<dbReference type="GO" id="GO:0005634">
    <property type="term" value="C:nucleus"/>
    <property type="evidence" value="ECO:0007669"/>
    <property type="project" value="UniProtKB-SubCell"/>
</dbReference>
<dbReference type="GO" id="GO:0003707">
    <property type="term" value="F:nuclear steroid receptor activity"/>
    <property type="evidence" value="ECO:0007669"/>
    <property type="project" value="InterPro"/>
</dbReference>
<dbReference type="GO" id="GO:0043565">
    <property type="term" value="F:sequence-specific DNA binding"/>
    <property type="evidence" value="ECO:0007669"/>
    <property type="project" value="InterPro"/>
</dbReference>
<dbReference type="GO" id="GO:0008270">
    <property type="term" value="F:zinc ion binding"/>
    <property type="evidence" value="ECO:0007669"/>
    <property type="project" value="UniProtKB-KW"/>
</dbReference>
<dbReference type="CDD" id="cd06956">
    <property type="entry name" value="NR_DBD_RXR"/>
    <property type="match status" value="1"/>
</dbReference>
<dbReference type="FunFam" id="3.30.50.10:FF:000005">
    <property type="entry name" value="Retinoic acid receptor RXR-alpha"/>
    <property type="match status" value="1"/>
</dbReference>
<dbReference type="Gene3D" id="3.30.50.10">
    <property type="entry name" value="Erythroid Transcription Factor GATA-1, subunit A"/>
    <property type="match status" value="1"/>
</dbReference>
<dbReference type="Gene3D" id="1.10.565.10">
    <property type="entry name" value="Retinoid X Receptor"/>
    <property type="match status" value="1"/>
</dbReference>
<dbReference type="InterPro" id="IPR035500">
    <property type="entry name" value="NHR-like_dom_sf"/>
</dbReference>
<dbReference type="InterPro" id="IPR000536">
    <property type="entry name" value="Nucl_hrmn_rcpt_lig-bd"/>
</dbReference>
<dbReference type="InterPro" id="IPR050274">
    <property type="entry name" value="Nuclear_hormone_rcpt_NR2"/>
</dbReference>
<dbReference type="InterPro" id="IPR001723">
    <property type="entry name" value="Nuclear_hrmn_rcpt"/>
</dbReference>
<dbReference type="InterPro" id="IPR000003">
    <property type="entry name" value="Retinoid-X_rcpt/HNF4"/>
</dbReference>
<dbReference type="InterPro" id="IPR001628">
    <property type="entry name" value="Znf_hrmn_rcpt"/>
</dbReference>
<dbReference type="InterPro" id="IPR013088">
    <property type="entry name" value="Znf_NHR/GATA"/>
</dbReference>
<dbReference type="PANTHER" id="PTHR24083">
    <property type="entry name" value="NUCLEAR HORMONE RECEPTOR"/>
    <property type="match status" value="1"/>
</dbReference>
<dbReference type="Pfam" id="PF00104">
    <property type="entry name" value="Hormone_recep"/>
    <property type="match status" value="1"/>
</dbReference>
<dbReference type="Pfam" id="PF00105">
    <property type="entry name" value="zf-C4"/>
    <property type="match status" value="1"/>
</dbReference>
<dbReference type="PRINTS" id="PR00545">
    <property type="entry name" value="RETINOIDXR"/>
</dbReference>
<dbReference type="PRINTS" id="PR00398">
    <property type="entry name" value="STRDHORMONER"/>
</dbReference>
<dbReference type="PRINTS" id="PR00047">
    <property type="entry name" value="STROIDFINGER"/>
</dbReference>
<dbReference type="SMART" id="SM00430">
    <property type="entry name" value="HOLI"/>
    <property type="match status" value="1"/>
</dbReference>
<dbReference type="SMART" id="SM00399">
    <property type="entry name" value="ZnF_C4"/>
    <property type="match status" value="1"/>
</dbReference>
<dbReference type="SUPFAM" id="SSF57716">
    <property type="entry name" value="Glucocorticoid receptor-like (DNA-binding domain)"/>
    <property type="match status" value="1"/>
</dbReference>
<dbReference type="SUPFAM" id="SSF48508">
    <property type="entry name" value="Nuclear receptor ligand-binding domain"/>
    <property type="match status" value="1"/>
</dbReference>
<dbReference type="PROSITE" id="PS51843">
    <property type="entry name" value="NR_LBD"/>
    <property type="match status" value="1"/>
</dbReference>
<dbReference type="PROSITE" id="PS00031">
    <property type="entry name" value="NUCLEAR_REC_DBD_1"/>
    <property type="match status" value="1"/>
</dbReference>
<dbReference type="PROSITE" id="PS51030">
    <property type="entry name" value="NUCLEAR_REC_DBD_2"/>
    <property type="match status" value="1"/>
</dbReference>
<accession>P49700</accession>
<feature type="chain" id="PRO_0000053583" description="Protein ultraspiracle homolog">
    <location>
        <begin position="1"/>
        <end position="462"/>
    </location>
</feature>
<feature type="domain" description="NR LBD" evidence="3">
    <location>
        <begin position="204"/>
        <end position="453"/>
    </location>
</feature>
<feature type="DNA-binding region" description="Nuclear receptor" evidence="2">
    <location>
        <begin position="114"/>
        <end position="179"/>
    </location>
</feature>
<feature type="zinc finger region" description="NR C4-type" evidence="2">
    <location>
        <begin position="114"/>
        <end position="134"/>
    </location>
</feature>
<feature type="zinc finger region" description="NR C4-type" evidence="2">
    <location>
        <begin position="150"/>
        <end position="174"/>
    </location>
</feature>
<feature type="region of interest" description="Modulating" evidence="1">
    <location>
        <begin position="1"/>
        <end position="113"/>
    </location>
</feature>
<feature type="region of interest" description="Hinge" evidence="1">
    <location>
        <begin position="180"/>
        <end position="201"/>
    </location>
</feature>
<reference key="1">
    <citation type="journal article" date="1994" name="J. Mol. Biol.">
        <title>BmCF1, a Bombyx mori RXR-type receptor related to the Drosophila ultraspiracle.</title>
        <authorList>
            <person name="Tzertzinis G."/>
            <person name="Malecki A."/>
            <person name="Kafatos F.C."/>
        </authorList>
    </citation>
    <scope>NUCLEOTIDE SEQUENCE [MRNA]</scope>
    <source>
        <strain>703</strain>
        <tissue>Ovary</tissue>
    </source>
</reference>
<organism>
    <name type="scientific">Bombyx mori</name>
    <name type="common">Silk moth</name>
    <dbReference type="NCBI Taxonomy" id="7091"/>
    <lineage>
        <taxon>Eukaryota</taxon>
        <taxon>Metazoa</taxon>
        <taxon>Ecdysozoa</taxon>
        <taxon>Arthropoda</taxon>
        <taxon>Hexapoda</taxon>
        <taxon>Insecta</taxon>
        <taxon>Pterygota</taxon>
        <taxon>Neoptera</taxon>
        <taxon>Endopterygota</taxon>
        <taxon>Lepidoptera</taxon>
        <taxon>Glossata</taxon>
        <taxon>Ditrysia</taxon>
        <taxon>Bombycoidea</taxon>
        <taxon>Bombycidae</taxon>
        <taxon>Bombycinae</taxon>
        <taxon>Bombyx</taxon>
    </lineage>
</organism>
<sequence length="462" mass="52149">MSSVAKKDKRTMSVTALINRAWPMTPSPQQQQQMVPSTQHSNFLHAMATPSTTPNVELDIQWLNIESGFMSPMSPPEMKPDTAMLDGFRDDSTPPPPFKNYPPNHPLSGSKHLCSICGDRASGKHYGVYSCEGCKGFFKRTVRKDLTYACREDKNCIIDKRQRNRCQYCRYQKCLACGMKREAVQEERQRAARRTEDAHPSSSVQELSIERLLELEALVADSAEELQILRVGPESGVPAKYRAPVSSLCQIGNKQIAALIVWARDIPHFGQLEIDDQILLIKGSWNELLLFAIAWRSMEFLNDERENVDSRNTAPPQLICLMPGMTLHRNSALQAGVGQIFDRVLSELSLKMRSLRMDQAECVALKAIILLNPDVKGLKNKQEVDVLREKMFLCLDEYCRRSRGGEEGRFAALLLRLPALRSISLKSFEHLYLFHLVAEGSVSSYIRDALCNHAPPIDTNIM</sequence>
<proteinExistence type="evidence at transcript level"/>
<keyword id="KW-0238">DNA-binding</keyword>
<keyword id="KW-0479">Metal-binding</keyword>
<keyword id="KW-0539">Nucleus</keyword>
<keyword id="KW-0675">Receptor</keyword>
<keyword id="KW-1185">Reference proteome</keyword>
<keyword id="KW-0804">Transcription</keyword>
<keyword id="KW-0805">Transcription regulation</keyword>
<keyword id="KW-0862">Zinc</keyword>
<keyword id="KW-0863">Zinc-finger</keyword>
<protein>
    <recommendedName>
        <fullName>Protein ultraspiracle homolog</fullName>
    </recommendedName>
    <alternativeName>
        <fullName>BmCF1</fullName>
    </alternativeName>
    <alternativeName>
        <fullName>Nuclear receptor subfamily 2 group B member 4</fullName>
    </alternativeName>
    <alternativeName>
        <fullName>RXR type hormone receptor CF1</fullName>
    </alternativeName>
</protein>
<evidence type="ECO:0000250" key="1"/>
<evidence type="ECO:0000255" key="2">
    <source>
        <dbReference type="PROSITE-ProRule" id="PRU00407"/>
    </source>
</evidence>
<evidence type="ECO:0000255" key="3">
    <source>
        <dbReference type="PROSITE-ProRule" id="PRU01189"/>
    </source>
</evidence>
<evidence type="ECO:0000305" key="4"/>
<gene>
    <name type="primary">USP</name>
    <name type="synonym">Cf1</name>
    <name type="synonym">NR2B4</name>
</gene>